<proteinExistence type="inferred from homology"/>
<accession>P26081</accession>
<comment type="function">
    <text evidence="1">Encapsidates the negative strand viral RNA, protecting it from nucleases. The encapsidated genomic RNA is termed the ribonucleoprotein (RNP) and serves as template for transcription and replication. The RNP needs to be localized in the host nucleus to start an infectious cycle, but is too large to diffuse through the nuclear pore complex. NP comprises at least 2 nuclear localization signals that are responsible for the active RNP import into the nucleus through cellular importin alpha/beta pathway. Later in the infection, nclear export of RNPs are mediated through viral proteins NEP interacting with M1 which binds nucleoproteins. It is possible that nucleoprotein binds directly host exportin-1/XPO1 and plays an active role in RNPs nuclear export. M1 interaction with RNP seems to hide nucleoprotein's nuclear localization signals. Soon after a virion infects a new cell, M1 dissociates from the RNP under acidification of the virion driven by M2 protein. Dissociation of M1 from RNP unmasks nucleoprotein's nuclear localization signals, targeting the RNP to the nucleus.</text>
</comment>
<comment type="subunit">
    <text evidence="1">Homomultimerizes to form the nucleocapsid. May bind host exportin-1/XPO1. Binds to viral genomic RNA. Protein-RNA contacts are mediated by a combination of electrostatic interactions between positively charged residues and the phosphate backbone and planar interactions between aromatic side chains and bases.</text>
</comment>
<comment type="subcellular location">
    <subcellularLocation>
        <location evidence="1">Virion</location>
    </subcellularLocation>
    <subcellularLocation>
        <location evidence="1">Host nucleus</location>
    </subcellularLocation>
</comment>
<comment type="PTM">
    <text evidence="1">Late in virus-infected cells, may be cleaved from a 56-kDa protein to a 53-kDa protein by a cellular caspase. This cleavage might be a marker for the onset of apoptosis in infected cells or have a specific function in virus host interaction.</text>
</comment>
<comment type="similarity">
    <text evidence="1">Belongs to the influenza viruses nucleoprotein family.</text>
</comment>
<feature type="chain" id="PRO_0000079132" description="Nucleoprotein">
    <location>
        <begin position="1"/>
        <end position="498"/>
    </location>
</feature>
<feature type="region of interest" description="Disordered" evidence="2">
    <location>
        <begin position="1"/>
        <end position="21"/>
    </location>
</feature>
<feature type="short sequence motif" description="Unconventional nuclear localization signal" evidence="1">
    <location>
        <begin position="1"/>
        <end position="18"/>
    </location>
</feature>
<feature type="short sequence motif" description="Bipartite nuclear localization signal" evidence="1">
    <location>
        <begin position="198"/>
        <end position="216"/>
    </location>
</feature>
<evidence type="ECO:0000255" key="1">
    <source>
        <dbReference type="HAMAP-Rule" id="MF_04070"/>
    </source>
</evidence>
<evidence type="ECO:0000256" key="2">
    <source>
        <dbReference type="SAM" id="MobiDB-lite"/>
    </source>
</evidence>
<keyword id="KW-0167">Capsid protein</keyword>
<keyword id="KW-1139">Helical capsid protein</keyword>
<keyword id="KW-1048">Host nucleus</keyword>
<keyword id="KW-0945">Host-virus interaction</keyword>
<keyword id="KW-0687">Ribonucleoprotein</keyword>
<keyword id="KW-0694">RNA-binding</keyword>
<keyword id="KW-0543">Viral nucleoprotein</keyword>
<keyword id="KW-1163">Viral penetration into host nucleus</keyword>
<keyword id="KW-0946">Virion</keyword>
<keyword id="KW-1160">Virus entry into host cell</keyword>
<protein>
    <recommendedName>
        <fullName evidence="1">Nucleoprotein</fullName>
    </recommendedName>
    <alternativeName>
        <fullName evidence="1">Nucleocapsid protein</fullName>
        <shortName evidence="1">Protein N</shortName>
    </alternativeName>
</protein>
<organism>
    <name type="scientific">Influenza A virus (strain A/Swine/May/1954 H1N1)</name>
    <dbReference type="NCBI Taxonomy" id="383535"/>
    <lineage>
        <taxon>Viruses</taxon>
        <taxon>Riboviria</taxon>
        <taxon>Orthornavirae</taxon>
        <taxon>Negarnaviricota</taxon>
        <taxon>Polyploviricotina</taxon>
        <taxon>Insthoviricetes</taxon>
        <taxon>Articulavirales</taxon>
        <taxon>Orthomyxoviridae</taxon>
        <taxon>Alphainfluenzavirus</taxon>
        <taxon>Alphainfluenzavirus influenzae</taxon>
        <taxon>Influenza A virus</taxon>
    </lineage>
</organism>
<name>NCAP_I54A1</name>
<sequence>MASQGTKRSYEQMETGGERQNATEIRASVGRMIGGIGRFYIQMCTELKLSDYEGRLIQNSITIERMVLSAFDERRNKYLEEHPSAGKDPKKTGGPIYRRIDGKWMRELILYDKEEIRRIWRQANNGEDATAGLTHIMIWHSNLNDATYQRTRALVRTGMDPRMCSLMQGSTLPRRSGAAGAAVKGVGTMVMELVRMIKRGINDRNFWRGENGRRTRIAYERMCNILKGKFQTAAQRAMMDQVRESRNPGNAEIEDLIFLARSALILRGSVAHKSCLPACVYGLAVASGHDFEREGYSLVGIDPFRLLQNSQVFSLIRPNENPAHKSQLVWMACHSAAFEDLRISGFIRGKRVVPRGQLSTRGVQIASNENMETMDSSTLELRSRYWAIRTRSGGNTNQQKASAGQISVQPTFSVQRNLPFERATIMAAFIGNTEGRTSDMRTEIIRMMESARPEDVSFQGRGVFELSDEKATSPIVPSFDMNNEGSYFFGDNAEEYDN</sequence>
<gene>
    <name evidence="1" type="primary">NP</name>
</gene>
<organismHost>
    <name type="scientific">Aves</name>
    <dbReference type="NCBI Taxonomy" id="8782"/>
</organismHost>
<organismHost>
    <name type="scientific">Homo sapiens</name>
    <name type="common">Human</name>
    <dbReference type="NCBI Taxonomy" id="9606"/>
</organismHost>
<organismHost>
    <name type="scientific">Sus scrofa</name>
    <name type="common">Pig</name>
    <dbReference type="NCBI Taxonomy" id="9823"/>
</organismHost>
<dbReference type="EMBL" id="M63761">
    <property type="protein sequence ID" value="AAA52260.1"/>
    <property type="molecule type" value="Genomic_RNA"/>
</dbReference>
<dbReference type="SMR" id="P26081"/>
<dbReference type="GO" id="GO:0019029">
    <property type="term" value="C:helical viral capsid"/>
    <property type="evidence" value="ECO:0007669"/>
    <property type="project" value="UniProtKB-UniRule"/>
</dbReference>
<dbReference type="GO" id="GO:0043657">
    <property type="term" value="C:host cell"/>
    <property type="evidence" value="ECO:0007669"/>
    <property type="project" value="GOC"/>
</dbReference>
<dbReference type="GO" id="GO:0042025">
    <property type="term" value="C:host cell nucleus"/>
    <property type="evidence" value="ECO:0007669"/>
    <property type="project" value="UniProtKB-SubCell"/>
</dbReference>
<dbReference type="GO" id="GO:1990904">
    <property type="term" value="C:ribonucleoprotein complex"/>
    <property type="evidence" value="ECO:0007669"/>
    <property type="project" value="UniProtKB-KW"/>
</dbReference>
<dbReference type="GO" id="GO:0019013">
    <property type="term" value="C:viral nucleocapsid"/>
    <property type="evidence" value="ECO:0007669"/>
    <property type="project" value="UniProtKB-UniRule"/>
</dbReference>
<dbReference type="GO" id="GO:0003723">
    <property type="term" value="F:RNA binding"/>
    <property type="evidence" value="ECO:0007669"/>
    <property type="project" value="UniProtKB-UniRule"/>
</dbReference>
<dbReference type="GO" id="GO:0005198">
    <property type="term" value="F:structural molecule activity"/>
    <property type="evidence" value="ECO:0007669"/>
    <property type="project" value="UniProtKB-UniRule"/>
</dbReference>
<dbReference type="GO" id="GO:0046718">
    <property type="term" value="P:symbiont entry into host cell"/>
    <property type="evidence" value="ECO:0007669"/>
    <property type="project" value="UniProtKB-KW"/>
</dbReference>
<dbReference type="GO" id="GO:0075732">
    <property type="term" value="P:viral penetration into host nucleus"/>
    <property type="evidence" value="ECO:0007669"/>
    <property type="project" value="UniProtKB-UniRule"/>
</dbReference>
<dbReference type="HAMAP" id="MF_04070">
    <property type="entry name" value="INFV_NCAP"/>
    <property type="match status" value="1"/>
</dbReference>
<dbReference type="InterPro" id="IPR002141">
    <property type="entry name" value="Flu_NP"/>
</dbReference>
<dbReference type="Pfam" id="PF00506">
    <property type="entry name" value="Flu_NP"/>
    <property type="match status" value="1"/>
</dbReference>
<dbReference type="SUPFAM" id="SSF161003">
    <property type="entry name" value="flu NP-like"/>
    <property type="match status" value="1"/>
</dbReference>
<reference key="1">
    <citation type="journal article" date="1991" name="J. Virol.">
        <title>Evolution of influenza A virus nucleoprotein genes: implications for the origins of H1N1 human and classical swine viruses.</title>
        <authorList>
            <person name="Gorman O.T."/>
            <person name="Bean W.J."/>
            <person name="Kawaoka Y."/>
            <person name="Donatelli I."/>
            <person name="Guo Y."/>
            <person name="Webster R.G."/>
        </authorList>
    </citation>
    <scope>NUCLEOTIDE SEQUENCE [GENOMIC RNA]</scope>
</reference>